<keyword id="KW-0963">Cytoplasm</keyword>
<keyword id="KW-0269">Exonuclease</keyword>
<keyword id="KW-0378">Hydrolase</keyword>
<keyword id="KW-0540">Nuclease</keyword>
<keyword id="KW-1185">Reference proteome</keyword>
<evidence type="ECO:0000255" key="1">
    <source>
        <dbReference type="HAMAP-Rule" id="MF_00378"/>
    </source>
</evidence>
<feature type="chain" id="PRO_1000122066" description="Exodeoxyribonuclease 7 large subunit">
    <location>
        <begin position="1"/>
        <end position="420"/>
    </location>
</feature>
<protein>
    <recommendedName>
        <fullName evidence="1">Exodeoxyribonuclease 7 large subunit</fullName>
        <ecNumber evidence="1">3.1.11.6</ecNumber>
    </recommendedName>
    <alternativeName>
        <fullName evidence="1">Exodeoxyribonuclease VII large subunit</fullName>
        <shortName evidence="1">Exonuclease VII large subunit</shortName>
    </alternativeName>
</protein>
<reference key="1">
    <citation type="journal article" date="2009" name="J. Bacteriol.">
        <title>The complete genome sequence of Helicobacter pylori strain G27.</title>
        <authorList>
            <person name="Baltrus D.A."/>
            <person name="Amieva M.R."/>
            <person name="Covacci A."/>
            <person name="Lowe T.M."/>
            <person name="Merrell D.S."/>
            <person name="Ottemann K.M."/>
            <person name="Stein M."/>
            <person name="Salama N.R."/>
            <person name="Guillemin K."/>
        </authorList>
    </citation>
    <scope>NUCLEOTIDE SEQUENCE [LARGE SCALE GENOMIC DNA]</scope>
    <source>
        <strain>G27</strain>
    </source>
</reference>
<dbReference type="EC" id="3.1.11.6" evidence="1"/>
<dbReference type="EMBL" id="CP001173">
    <property type="protein sequence ID" value="ACI27005.1"/>
    <property type="molecule type" value="Genomic_DNA"/>
</dbReference>
<dbReference type="RefSeq" id="WP_000558338.1">
    <property type="nucleotide sequence ID" value="NC_011333.1"/>
</dbReference>
<dbReference type="SMR" id="B5ZA25"/>
<dbReference type="KEGG" id="hpg:HPG27_238"/>
<dbReference type="HOGENOM" id="CLU_023625_2_0_7"/>
<dbReference type="Proteomes" id="UP000001735">
    <property type="component" value="Chromosome"/>
</dbReference>
<dbReference type="GO" id="GO:0005737">
    <property type="term" value="C:cytoplasm"/>
    <property type="evidence" value="ECO:0007669"/>
    <property type="project" value="UniProtKB-SubCell"/>
</dbReference>
<dbReference type="GO" id="GO:0009318">
    <property type="term" value="C:exodeoxyribonuclease VII complex"/>
    <property type="evidence" value="ECO:0007669"/>
    <property type="project" value="InterPro"/>
</dbReference>
<dbReference type="GO" id="GO:0008855">
    <property type="term" value="F:exodeoxyribonuclease VII activity"/>
    <property type="evidence" value="ECO:0007669"/>
    <property type="project" value="UniProtKB-UniRule"/>
</dbReference>
<dbReference type="GO" id="GO:0003676">
    <property type="term" value="F:nucleic acid binding"/>
    <property type="evidence" value="ECO:0007669"/>
    <property type="project" value="InterPro"/>
</dbReference>
<dbReference type="GO" id="GO:0006308">
    <property type="term" value="P:DNA catabolic process"/>
    <property type="evidence" value="ECO:0007669"/>
    <property type="project" value="UniProtKB-UniRule"/>
</dbReference>
<dbReference type="CDD" id="cd04489">
    <property type="entry name" value="ExoVII_LU_OBF"/>
    <property type="match status" value="1"/>
</dbReference>
<dbReference type="Gene3D" id="2.40.50.1010">
    <property type="match status" value="1"/>
</dbReference>
<dbReference type="HAMAP" id="MF_00378">
    <property type="entry name" value="Exonuc_7_L"/>
    <property type="match status" value="1"/>
</dbReference>
<dbReference type="InterPro" id="IPR003753">
    <property type="entry name" value="Exonuc_VII_L"/>
</dbReference>
<dbReference type="InterPro" id="IPR020579">
    <property type="entry name" value="Exonuc_VII_lsu_C"/>
</dbReference>
<dbReference type="InterPro" id="IPR025824">
    <property type="entry name" value="OB-fold_nuc-bd_dom"/>
</dbReference>
<dbReference type="NCBIfam" id="TIGR00237">
    <property type="entry name" value="xseA"/>
    <property type="match status" value="1"/>
</dbReference>
<dbReference type="PANTHER" id="PTHR30008">
    <property type="entry name" value="EXODEOXYRIBONUCLEASE 7 LARGE SUBUNIT"/>
    <property type="match status" value="1"/>
</dbReference>
<dbReference type="PANTHER" id="PTHR30008:SF0">
    <property type="entry name" value="EXODEOXYRIBONUCLEASE 7 LARGE SUBUNIT"/>
    <property type="match status" value="1"/>
</dbReference>
<dbReference type="Pfam" id="PF02601">
    <property type="entry name" value="Exonuc_VII_L"/>
    <property type="match status" value="1"/>
</dbReference>
<dbReference type="Pfam" id="PF13742">
    <property type="entry name" value="tRNA_anti_2"/>
    <property type="match status" value="1"/>
</dbReference>
<organism>
    <name type="scientific">Helicobacter pylori (strain G27)</name>
    <dbReference type="NCBI Taxonomy" id="563041"/>
    <lineage>
        <taxon>Bacteria</taxon>
        <taxon>Pseudomonadati</taxon>
        <taxon>Campylobacterota</taxon>
        <taxon>Epsilonproteobacteria</taxon>
        <taxon>Campylobacterales</taxon>
        <taxon>Helicobacteraceae</taxon>
        <taxon>Helicobacter</taxon>
    </lineage>
</organism>
<name>EX7L_HELPG</name>
<proteinExistence type="inferred from homology"/>
<comment type="function">
    <text evidence="1">Bidirectionally degrades single-stranded DNA into large acid-insoluble oligonucleotides, which are then degraded further into small acid-soluble oligonucleotides.</text>
</comment>
<comment type="catalytic activity">
    <reaction evidence="1">
        <text>Exonucleolytic cleavage in either 5'- to 3'- or 3'- to 5'-direction to yield nucleoside 5'-phosphates.</text>
        <dbReference type="EC" id="3.1.11.6"/>
    </reaction>
</comment>
<comment type="subunit">
    <text evidence="1">Heterooligomer composed of large and small subunits.</text>
</comment>
<comment type="subcellular location">
    <subcellularLocation>
        <location evidence="1">Cytoplasm</location>
    </subcellularLocation>
</comment>
<comment type="similarity">
    <text evidence="1">Belongs to the XseA family.</text>
</comment>
<sequence length="420" mass="47051">MHVLSVSEINVQIKALLEATFLQVRVQGEVSNLTIHKVSGHAYFSLKDSQSVIRCVLFKGNANRLKFALKEGQEMVVFGGISVYVPRGDYQINCFEIEPKEIGSLTLALEQLKEKLRLKGYFDEANKLPKPHFPKRVAVITSQNSAAWADMKKIASKRWPMCELVCINTLMQGEGCVQSVVESIAYADSFHDTKNAFDAIVVARGGGSMEDLYSFNDEKIADALYLAKTFSMSAIGHESDFLLSDLVADLRASTPSNAMEILLPNSDEWLQRLDGFNVKLCRSFKTLLHQKKVHLEHLAASLKRLSFENKHHLNALKLEKLTIALENKTLEFLRLKKTLLEKISIQTLTSPFLQTKTERLNRLENALKLAHANLKLPQFGALVSKNNQAVELEVLKAGDKIELSNEKARASAEILSVDRV</sequence>
<gene>
    <name evidence="1" type="primary">xseA</name>
    <name type="ordered locus">HPG27_238</name>
</gene>
<accession>B5ZA25</accession>